<name>50511_ASFWA</name>
<evidence type="ECO:0000250" key="1">
    <source>
        <dbReference type="UniProtKB" id="Q65208"/>
    </source>
</evidence>
<evidence type="ECO:0000305" key="2"/>
<sequence>MFSLQKKALQHIYMTPENASQLTKDLLQHLGLYWNGPIIKMDTVVHLHNKIFSNRSVLKYALAKQANITIIKTLVLWVEPEYALAQALKHNRKDVLECIFSYHLTTPKYHHIMHLTSSQELFEFFHLFICKSKNYNARMECLLYAATLYNFPNILEKNREYIIRYSIGNSLFAIACKERHIHLIAWFVTAGVLDTYDDSMLFNTAFKLGDYSLLEVACDLPIIYPDYLIISMMQTAIQKNYFRFFKKLLTHFNIYRQIIITDAAYYNRRKILLLLLKQNIFNNFAILCALSAAIKGHASKKTLNLLISQLDSQMTVVDSVYYSIIKYNNIDCIPLLMQIKTFRMETLVSIAVHGNNINIIAACKAFLPKDTLYHLVLKMAIVSRNYKLFKLYTEKENPMYIFTTIKAIISNLVNYTVVQAVAIEYLRKFHQERQLPIVPLLMVLAEHNYITKFKKTCYAANMSDQKVKRALIKCLFIASQKNYCQIFKYCFGSLLKVLSKHERVKFFNSVVFAKKLASYYDHQNMIHLIDSLIERFRYLIKD</sequence>
<feature type="chain" id="PRO_0000373358" description="Protein MGF 505-11L">
    <location>
        <begin position="1"/>
        <end position="542"/>
    </location>
</feature>
<comment type="function">
    <text evidence="1">Plays a role in virus cell tropism, and may be required for efficient virus replication in macrophages.</text>
</comment>
<comment type="induction">
    <text evidence="2">Expressed in the early phase of the viral replicative cycle.</text>
</comment>
<comment type="similarity">
    <text evidence="2">Belongs to the asfivirus MGF 505 family.</text>
</comment>
<organism>
    <name type="scientific">African swine fever virus (isolate Warthog/Namibia/Wart80/1980)</name>
    <name type="common">ASFV</name>
    <dbReference type="NCBI Taxonomy" id="561444"/>
    <lineage>
        <taxon>Viruses</taxon>
        <taxon>Varidnaviria</taxon>
        <taxon>Bamfordvirae</taxon>
        <taxon>Nucleocytoviricota</taxon>
        <taxon>Pokkesviricetes</taxon>
        <taxon>Asfuvirales</taxon>
        <taxon>Asfarviridae</taxon>
        <taxon>Asfivirus</taxon>
        <taxon>African swine fever virus</taxon>
    </lineage>
</organism>
<organismHost>
    <name type="scientific">Ornithodoros</name>
    <name type="common">relapsing fever ticks</name>
    <dbReference type="NCBI Taxonomy" id="6937"/>
</organismHost>
<organismHost>
    <name type="scientific">Phacochoerus aethiopicus</name>
    <name type="common">Warthog</name>
    <dbReference type="NCBI Taxonomy" id="85517"/>
</organismHost>
<organismHost>
    <name type="scientific">Phacochoerus africanus</name>
    <name type="common">Warthog</name>
    <dbReference type="NCBI Taxonomy" id="41426"/>
</organismHost>
<organismHost>
    <name type="scientific">Potamochoerus larvatus</name>
    <name type="common">Bushpig</name>
    <dbReference type="NCBI Taxonomy" id="273792"/>
</organismHost>
<organismHost>
    <name type="scientific">Sus scrofa</name>
    <name type="common">Pig</name>
    <dbReference type="NCBI Taxonomy" id="9823"/>
</organismHost>
<protein>
    <recommendedName>
        <fullName>Protein MGF 505-11L</fullName>
    </recommendedName>
</protein>
<proteinExistence type="inferred from homology"/>
<accession>P0C9V5</accession>
<reference key="1">
    <citation type="submission" date="2003-03" db="EMBL/GenBank/DDBJ databases">
        <title>African swine fever virus genomes.</title>
        <authorList>
            <person name="Kutish G.F."/>
            <person name="Rock D.L."/>
        </authorList>
    </citation>
    <scope>NUCLEOTIDE SEQUENCE [LARGE SCALE GENOMIC DNA]</scope>
</reference>
<dbReference type="EMBL" id="AY261366">
    <property type="status" value="NOT_ANNOTATED_CDS"/>
    <property type="molecule type" value="Genomic_DNA"/>
</dbReference>
<dbReference type="SMR" id="P0C9V5"/>
<dbReference type="Proteomes" id="UP000000858">
    <property type="component" value="Segment"/>
</dbReference>
<dbReference type="InterPro" id="IPR004858">
    <property type="entry name" value="MGF_505"/>
</dbReference>
<dbReference type="Pfam" id="PF03158">
    <property type="entry name" value="DUF249"/>
    <property type="match status" value="1"/>
</dbReference>
<keyword id="KW-0244">Early protein</keyword>
<gene>
    <name type="ordered locus">War-160</name>
</gene>